<proteinExistence type="inferred from homology"/>
<protein>
    <recommendedName>
        <fullName evidence="1">Large ribosomal subunit protein bL19</fullName>
    </recommendedName>
    <alternativeName>
        <fullName evidence="2">50S ribosomal protein L19</fullName>
    </alternativeName>
</protein>
<comment type="function">
    <text evidence="1">This protein is located at the 30S-50S ribosomal subunit interface and may play a role in the structure and function of the aminoacyl-tRNA binding site.</text>
</comment>
<comment type="similarity">
    <text evidence="1">Belongs to the bacterial ribosomal protein bL19 family.</text>
</comment>
<sequence length="113" mass="13032">MNRLDFVDQASLRDDIPAFSPGDTINVHVKVIEGVKERIQVFKGVVIRRQGGGIRETFTVRKESYGVGVERTFPVHSPNIDHIEMVIRGDVRRAKLYYLRELRGKKAKIKEKR</sequence>
<keyword id="KW-0687">Ribonucleoprotein</keyword>
<keyword id="KW-0689">Ribosomal protein</keyword>
<accession>B8ZRW5</accession>
<name>RL19_MYCLB</name>
<dbReference type="EMBL" id="FM211192">
    <property type="protein sequence ID" value="CAR71708.1"/>
    <property type="molecule type" value="Genomic_DNA"/>
</dbReference>
<dbReference type="SMR" id="B8ZRW5"/>
<dbReference type="KEGG" id="mlb:MLBr01613"/>
<dbReference type="HOGENOM" id="CLU_103507_2_1_11"/>
<dbReference type="Proteomes" id="UP000006900">
    <property type="component" value="Chromosome"/>
</dbReference>
<dbReference type="GO" id="GO:0022625">
    <property type="term" value="C:cytosolic large ribosomal subunit"/>
    <property type="evidence" value="ECO:0007669"/>
    <property type="project" value="TreeGrafter"/>
</dbReference>
<dbReference type="GO" id="GO:0003735">
    <property type="term" value="F:structural constituent of ribosome"/>
    <property type="evidence" value="ECO:0007669"/>
    <property type="project" value="InterPro"/>
</dbReference>
<dbReference type="GO" id="GO:0006412">
    <property type="term" value="P:translation"/>
    <property type="evidence" value="ECO:0007669"/>
    <property type="project" value="UniProtKB-UniRule"/>
</dbReference>
<dbReference type="FunFam" id="2.30.30.790:FF:000001">
    <property type="entry name" value="50S ribosomal protein L19"/>
    <property type="match status" value="1"/>
</dbReference>
<dbReference type="Gene3D" id="2.30.30.790">
    <property type="match status" value="1"/>
</dbReference>
<dbReference type="HAMAP" id="MF_00402">
    <property type="entry name" value="Ribosomal_bL19"/>
    <property type="match status" value="1"/>
</dbReference>
<dbReference type="InterPro" id="IPR001857">
    <property type="entry name" value="Ribosomal_bL19"/>
</dbReference>
<dbReference type="InterPro" id="IPR018257">
    <property type="entry name" value="Ribosomal_bL19_CS"/>
</dbReference>
<dbReference type="InterPro" id="IPR038657">
    <property type="entry name" value="Ribosomal_bL19_sf"/>
</dbReference>
<dbReference type="InterPro" id="IPR008991">
    <property type="entry name" value="Translation_prot_SH3-like_sf"/>
</dbReference>
<dbReference type="NCBIfam" id="TIGR01024">
    <property type="entry name" value="rplS_bact"/>
    <property type="match status" value="1"/>
</dbReference>
<dbReference type="PANTHER" id="PTHR15680:SF9">
    <property type="entry name" value="LARGE RIBOSOMAL SUBUNIT PROTEIN BL19M"/>
    <property type="match status" value="1"/>
</dbReference>
<dbReference type="PANTHER" id="PTHR15680">
    <property type="entry name" value="RIBOSOMAL PROTEIN L19"/>
    <property type="match status" value="1"/>
</dbReference>
<dbReference type="Pfam" id="PF01245">
    <property type="entry name" value="Ribosomal_L19"/>
    <property type="match status" value="1"/>
</dbReference>
<dbReference type="PIRSF" id="PIRSF002191">
    <property type="entry name" value="Ribosomal_L19"/>
    <property type="match status" value="1"/>
</dbReference>
<dbReference type="PRINTS" id="PR00061">
    <property type="entry name" value="RIBOSOMALL19"/>
</dbReference>
<dbReference type="SUPFAM" id="SSF50104">
    <property type="entry name" value="Translation proteins SH3-like domain"/>
    <property type="match status" value="1"/>
</dbReference>
<dbReference type="PROSITE" id="PS01015">
    <property type="entry name" value="RIBOSOMAL_L19"/>
    <property type="match status" value="1"/>
</dbReference>
<evidence type="ECO:0000255" key="1">
    <source>
        <dbReference type="HAMAP-Rule" id="MF_00402"/>
    </source>
</evidence>
<evidence type="ECO:0000305" key="2"/>
<organism>
    <name type="scientific">Mycobacterium leprae (strain Br4923)</name>
    <dbReference type="NCBI Taxonomy" id="561304"/>
    <lineage>
        <taxon>Bacteria</taxon>
        <taxon>Bacillati</taxon>
        <taxon>Actinomycetota</taxon>
        <taxon>Actinomycetes</taxon>
        <taxon>Mycobacteriales</taxon>
        <taxon>Mycobacteriaceae</taxon>
        <taxon>Mycobacterium</taxon>
    </lineage>
</organism>
<reference key="1">
    <citation type="journal article" date="2009" name="Nat. Genet.">
        <title>Comparative genomic and phylogeographic analysis of Mycobacterium leprae.</title>
        <authorList>
            <person name="Monot M."/>
            <person name="Honore N."/>
            <person name="Garnier T."/>
            <person name="Zidane N."/>
            <person name="Sherafi D."/>
            <person name="Paniz-Mondolfi A."/>
            <person name="Matsuoka M."/>
            <person name="Taylor G.M."/>
            <person name="Donoghue H.D."/>
            <person name="Bouwman A."/>
            <person name="Mays S."/>
            <person name="Watson C."/>
            <person name="Lockwood D."/>
            <person name="Khamispour A."/>
            <person name="Dowlati Y."/>
            <person name="Jianping S."/>
            <person name="Rea T.H."/>
            <person name="Vera-Cabrera L."/>
            <person name="Stefani M.M."/>
            <person name="Banu S."/>
            <person name="Macdonald M."/>
            <person name="Sapkota B.R."/>
            <person name="Spencer J.S."/>
            <person name="Thomas J."/>
            <person name="Harshman K."/>
            <person name="Singh P."/>
            <person name="Busso P."/>
            <person name="Gattiker A."/>
            <person name="Rougemont J."/>
            <person name="Brennan P.J."/>
            <person name="Cole S.T."/>
        </authorList>
    </citation>
    <scope>NUCLEOTIDE SEQUENCE [LARGE SCALE GENOMIC DNA]</scope>
    <source>
        <strain>Br4923</strain>
    </source>
</reference>
<feature type="chain" id="PRO_1000193867" description="Large ribosomal subunit protein bL19">
    <location>
        <begin position="1"/>
        <end position="113"/>
    </location>
</feature>
<gene>
    <name evidence="1" type="primary">rplS</name>
    <name type="ordered locus">MLBr01613</name>
</gene>